<evidence type="ECO:0000250" key="1"/>
<evidence type="ECO:0000250" key="2">
    <source>
        <dbReference type="UniProtKB" id="O22317"/>
    </source>
</evidence>
<evidence type="ECO:0000255" key="3"/>
<evidence type="ECO:0000305" key="4"/>
<dbReference type="EC" id="3.2.1.39"/>
<dbReference type="EMBL" id="U01900">
    <property type="protein sequence ID" value="AAA88794.1"/>
    <property type="molecule type" value="mRNA"/>
</dbReference>
<dbReference type="PIR" id="S65022">
    <property type="entry name" value="S65022"/>
</dbReference>
<dbReference type="SMR" id="P52400"/>
<dbReference type="FunCoup" id="P52400">
    <property type="interactions" value="38"/>
</dbReference>
<dbReference type="STRING" id="4113.P52400"/>
<dbReference type="Allergome" id="2551">
    <property type="allergen name" value="Sola t Glucanase"/>
</dbReference>
<dbReference type="CAZy" id="GH17">
    <property type="family name" value="Glycoside Hydrolase Family 17"/>
</dbReference>
<dbReference type="GlyCosmos" id="P52400">
    <property type="glycosylation" value="1 site, No reported glycans"/>
</dbReference>
<dbReference type="PaxDb" id="4113-PGSC0003DMT400090689"/>
<dbReference type="eggNOG" id="ENOG502QQ3M">
    <property type="taxonomic scope" value="Eukaryota"/>
</dbReference>
<dbReference type="InParanoid" id="P52400"/>
<dbReference type="Proteomes" id="UP000011115">
    <property type="component" value="Unassembled WGS sequence"/>
</dbReference>
<dbReference type="ExpressionAtlas" id="P52400">
    <property type="expression patterns" value="baseline and differential"/>
</dbReference>
<dbReference type="GO" id="GO:0005773">
    <property type="term" value="C:vacuole"/>
    <property type="evidence" value="ECO:0007669"/>
    <property type="project" value="UniProtKB-SubCell"/>
</dbReference>
<dbReference type="GO" id="GO:0042973">
    <property type="term" value="F:glucan endo-1,3-beta-D-glucosidase activity"/>
    <property type="evidence" value="ECO:0007669"/>
    <property type="project" value="UniProtKB-EC"/>
</dbReference>
<dbReference type="GO" id="GO:0005975">
    <property type="term" value="P:carbohydrate metabolic process"/>
    <property type="evidence" value="ECO:0007669"/>
    <property type="project" value="InterPro"/>
</dbReference>
<dbReference type="GO" id="GO:0006952">
    <property type="term" value="P:defense response"/>
    <property type="evidence" value="ECO:0007669"/>
    <property type="project" value="UniProtKB-KW"/>
</dbReference>
<dbReference type="FunFam" id="3.20.20.80:FF:000010">
    <property type="entry name" value="glucan endo-1,3-beta-glucosidase, basic"/>
    <property type="match status" value="1"/>
</dbReference>
<dbReference type="Gene3D" id="3.20.20.80">
    <property type="entry name" value="Glycosidases"/>
    <property type="match status" value="1"/>
</dbReference>
<dbReference type="InterPro" id="IPR000490">
    <property type="entry name" value="Glyco_hydro_17"/>
</dbReference>
<dbReference type="InterPro" id="IPR044965">
    <property type="entry name" value="Glyco_hydro_17_plant"/>
</dbReference>
<dbReference type="InterPro" id="IPR017853">
    <property type="entry name" value="Glycoside_hydrolase_SF"/>
</dbReference>
<dbReference type="PANTHER" id="PTHR32227">
    <property type="entry name" value="GLUCAN ENDO-1,3-BETA-GLUCOSIDASE BG1-RELATED-RELATED"/>
    <property type="match status" value="1"/>
</dbReference>
<dbReference type="Pfam" id="PF00332">
    <property type="entry name" value="Glyco_hydro_17"/>
    <property type="match status" value="1"/>
</dbReference>
<dbReference type="SUPFAM" id="SSF51445">
    <property type="entry name" value="(Trans)glycosidases"/>
    <property type="match status" value="1"/>
</dbReference>
<dbReference type="PROSITE" id="PS00587">
    <property type="entry name" value="GLYCOSYL_HYDROL_F17"/>
    <property type="match status" value="1"/>
</dbReference>
<protein>
    <recommendedName>
        <fullName>Glucan endo-1,3-beta-glucosidase, basic isoform 1</fullName>
        <ecNumber>3.2.1.39</ecNumber>
    </recommendedName>
    <alternativeName>
        <fullName>(1-&gt;3)-beta-glucan endohydrolase</fullName>
        <shortName>(1-&gt;3)-beta-glucanase</shortName>
    </alternativeName>
    <alternativeName>
        <fullName>Beta-1,3-endoglucanase</fullName>
    </alternativeName>
</protein>
<keyword id="KW-0325">Glycoprotein</keyword>
<keyword id="KW-0326">Glycosidase</keyword>
<keyword id="KW-0378">Hydrolase</keyword>
<keyword id="KW-0611">Plant defense</keyword>
<keyword id="KW-1185">Reference proteome</keyword>
<keyword id="KW-0926">Vacuole</keyword>
<name>E131_SOLTU</name>
<organism>
    <name type="scientific">Solanum tuberosum</name>
    <name type="common">Potato</name>
    <dbReference type="NCBI Taxonomy" id="4113"/>
    <lineage>
        <taxon>Eukaryota</taxon>
        <taxon>Viridiplantae</taxon>
        <taxon>Streptophyta</taxon>
        <taxon>Embryophyta</taxon>
        <taxon>Tracheophyta</taxon>
        <taxon>Spermatophyta</taxon>
        <taxon>Magnoliopsida</taxon>
        <taxon>eudicotyledons</taxon>
        <taxon>Gunneridae</taxon>
        <taxon>Pentapetalae</taxon>
        <taxon>asterids</taxon>
        <taxon>lamiids</taxon>
        <taxon>Solanales</taxon>
        <taxon>Solanaceae</taxon>
        <taxon>Solanoideae</taxon>
        <taxon>Solaneae</taxon>
        <taxon>Solanum</taxon>
    </lineage>
</organism>
<accession>P52400</accession>
<comment type="function">
    <text>Is thought to be an important plant defense-related product against fungal pathogens.</text>
</comment>
<comment type="catalytic activity">
    <reaction>
        <text>Hydrolysis of (1-&gt;3)-beta-D-glucosidic linkages in (1-&gt;3)-beta-D-glucans.</text>
        <dbReference type="EC" id="3.2.1.39"/>
    </reaction>
</comment>
<comment type="subcellular location">
    <subcellularLocation>
        <location evidence="1">Vacuole</location>
    </subcellularLocation>
</comment>
<comment type="developmental stage">
    <text>Highest levels in old segments of leaves, stems and roots.</text>
</comment>
<comment type="induction">
    <text>In leaves, in response to infection, elicitor, ethylene, or wounding.</text>
</comment>
<comment type="similarity">
    <text evidence="4">Belongs to the glycosyl hydrolase 17 family.</text>
</comment>
<feature type="chain" id="PRO_0000011860" description="Glucan endo-1,3-beta-glucosidase, basic isoform 1">
    <location>
        <begin position="1" status="less than"/>
        <end position="314"/>
    </location>
</feature>
<feature type="propeptide" id="PRO_0000011861" description="Removed in mature form" evidence="1">
    <location>
        <begin position="315"/>
        <end position="337"/>
    </location>
</feature>
<feature type="active site" description="Proton donor" evidence="2">
    <location>
        <position position="94"/>
    </location>
</feature>
<feature type="active site" description="Nucleophile" evidence="2">
    <location>
        <position position="239"/>
    </location>
</feature>
<feature type="glycosylation site" description="N-linked (GlcNAc...) asparagine" evidence="3">
    <location>
        <position position="327"/>
    </location>
</feature>
<feature type="non-terminal residue">
    <location>
        <position position="1"/>
    </location>
</feature>
<proteinExistence type="evidence at transcript level"/>
<gene>
    <name type="primary">GLUB1</name>
</gene>
<sequence>LGVCYGMMGNNLPSHSEVIQLYKSRNIGRLRLYDPNHGALNALRGSNIEVILGLPNVDVKHIASGMEHARWWVQKNVKDFWPDVKIKYIAVGNEISPVTGTSSLTSFQVPALVNIYKAVGEAGLGNDIKVSTSVDMTLIGNSYPPSQGSFRNDVRWFTDPIVGFLRDTRAPLLVNIYPYFSYSGNPGQISLPYALFTAPNAVVQDGSRQYRNLFDAMLDSVYAAMERTGGGSVGIVVSESGWPSAGAFGATQDNAATYLRNLIQHAKEGSPRKPGPIETYIFAMFDENNKNPELEKHFGLFSPNKQPKYNLNFGVSERVWDISAETNSTASSLISEM</sequence>
<reference key="1">
    <citation type="journal article" date="1994" name="Plant Mol. Biol.">
        <title>Primary structure and expression of mRNAs encoding basic chitinase and 1,3-beta-glucanase in potato.</title>
        <authorList>
            <person name="Beerhues L."/>
            <person name="Kombrink E."/>
        </authorList>
    </citation>
    <scope>NUCLEOTIDE SEQUENCE [MRNA]</scope>
    <source>
        <strain>cv. Datura</strain>
        <tissue>Leaf</tissue>
    </source>
</reference>